<keyword id="KW-0067">ATP-binding</keyword>
<keyword id="KW-0418">Kinase</keyword>
<keyword id="KW-0545">Nucleotide biosynthesis</keyword>
<keyword id="KW-0547">Nucleotide-binding</keyword>
<keyword id="KW-1185">Reference proteome</keyword>
<keyword id="KW-0808">Transferase</keyword>
<dbReference type="EC" id="2.7.4.9"/>
<dbReference type="EMBL" id="AE005176">
    <property type="protein sequence ID" value="AAK04496.1"/>
    <property type="molecule type" value="Genomic_DNA"/>
</dbReference>
<dbReference type="PIR" id="F86674">
    <property type="entry name" value="F86674"/>
</dbReference>
<dbReference type="RefSeq" id="NP_266554.1">
    <property type="nucleotide sequence ID" value="NC_002662.1"/>
</dbReference>
<dbReference type="RefSeq" id="WP_003131575.1">
    <property type="nucleotide sequence ID" value="NC_002662.1"/>
</dbReference>
<dbReference type="SMR" id="Q9CIG4"/>
<dbReference type="PaxDb" id="272623-L3846"/>
<dbReference type="EnsemblBacteria" id="AAK04496">
    <property type="protein sequence ID" value="AAK04496"/>
    <property type="gene ID" value="L3846"/>
</dbReference>
<dbReference type="KEGG" id="lla:L3846"/>
<dbReference type="PATRIC" id="fig|272623.7.peg.432"/>
<dbReference type="eggNOG" id="COG0125">
    <property type="taxonomic scope" value="Bacteria"/>
</dbReference>
<dbReference type="HOGENOM" id="CLU_049131_0_2_9"/>
<dbReference type="OrthoDB" id="9774907at2"/>
<dbReference type="Proteomes" id="UP000002196">
    <property type="component" value="Chromosome"/>
</dbReference>
<dbReference type="GO" id="GO:0005829">
    <property type="term" value="C:cytosol"/>
    <property type="evidence" value="ECO:0007669"/>
    <property type="project" value="TreeGrafter"/>
</dbReference>
<dbReference type="GO" id="GO:0005524">
    <property type="term" value="F:ATP binding"/>
    <property type="evidence" value="ECO:0007669"/>
    <property type="project" value="UniProtKB-UniRule"/>
</dbReference>
<dbReference type="GO" id="GO:0004798">
    <property type="term" value="F:dTMP kinase activity"/>
    <property type="evidence" value="ECO:0007669"/>
    <property type="project" value="UniProtKB-UniRule"/>
</dbReference>
<dbReference type="GO" id="GO:0006233">
    <property type="term" value="P:dTDP biosynthetic process"/>
    <property type="evidence" value="ECO:0007669"/>
    <property type="project" value="InterPro"/>
</dbReference>
<dbReference type="GO" id="GO:0006235">
    <property type="term" value="P:dTTP biosynthetic process"/>
    <property type="evidence" value="ECO:0007669"/>
    <property type="project" value="UniProtKB-UniRule"/>
</dbReference>
<dbReference type="GO" id="GO:0006227">
    <property type="term" value="P:dUDP biosynthetic process"/>
    <property type="evidence" value="ECO:0007669"/>
    <property type="project" value="TreeGrafter"/>
</dbReference>
<dbReference type="CDD" id="cd01672">
    <property type="entry name" value="TMPK"/>
    <property type="match status" value="1"/>
</dbReference>
<dbReference type="FunFam" id="3.40.50.300:FF:000225">
    <property type="entry name" value="Thymidylate kinase"/>
    <property type="match status" value="1"/>
</dbReference>
<dbReference type="Gene3D" id="3.40.50.300">
    <property type="entry name" value="P-loop containing nucleotide triphosphate hydrolases"/>
    <property type="match status" value="1"/>
</dbReference>
<dbReference type="HAMAP" id="MF_00165">
    <property type="entry name" value="Thymidylate_kinase"/>
    <property type="match status" value="1"/>
</dbReference>
<dbReference type="InterPro" id="IPR027417">
    <property type="entry name" value="P-loop_NTPase"/>
</dbReference>
<dbReference type="InterPro" id="IPR039430">
    <property type="entry name" value="Thymidylate_kin-like_dom"/>
</dbReference>
<dbReference type="InterPro" id="IPR018095">
    <property type="entry name" value="Thymidylate_kin_CS"/>
</dbReference>
<dbReference type="InterPro" id="IPR018094">
    <property type="entry name" value="Thymidylate_kinase"/>
</dbReference>
<dbReference type="NCBIfam" id="TIGR00041">
    <property type="entry name" value="DTMP_kinase"/>
    <property type="match status" value="1"/>
</dbReference>
<dbReference type="PANTHER" id="PTHR10344">
    <property type="entry name" value="THYMIDYLATE KINASE"/>
    <property type="match status" value="1"/>
</dbReference>
<dbReference type="PANTHER" id="PTHR10344:SF4">
    <property type="entry name" value="UMP-CMP KINASE 2, MITOCHONDRIAL"/>
    <property type="match status" value="1"/>
</dbReference>
<dbReference type="Pfam" id="PF02223">
    <property type="entry name" value="Thymidylate_kin"/>
    <property type="match status" value="1"/>
</dbReference>
<dbReference type="SUPFAM" id="SSF52540">
    <property type="entry name" value="P-loop containing nucleoside triphosphate hydrolases"/>
    <property type="match status" value="1"/>
</dbReference>
<dbReference type="PROSITE" id="PS01331">
    <property type="entry name" value="THYMIDYLATE_KINASE"/>
    <property type="match status" value="1"/>
</dbReference>
<organism>
    <name type="scientific">Lactococcus lactis subsp. lactis (strain IL1403)</name>
    <name type="common">Streptococcus lactis</name>
    <dbReference type="NCBI Taxonomy" id="272623"/>
    <lineage>
        <taxon>Bacteria</taxon>
        <taxon>Bacillati</taxon>
        <taxon>Bacillota</taxon>
        <taxon>Bacilli</taxon>
        <taxon>Lactobacillales</taxon>
        <taxon>Streptococcaceae</taxon>
        <taxon>Lactococcus</taxon>
    </lineage>
</organism>
<comment type="function">
    <text evidence="1">Phosphorylation of dTMP to form dTDP in both de novo and salvage pathways of dTTP synthesis.</text>
</comment>
<comment type="catalytic activity">
    <reaction>
        <text>dTMP + ATP = dTDP + ADP</text>
        <dbReference type="Rhea" id="RHEA:13517"/>
        <dbReference type="ChEBI" id="CHEBI:30616"/>
        <dbReference type="ChEBI" id="CHEBI:58369"/>
        <dbReference type="ChEBI" id="CHEBI:63528"/>
        <dbReference type="ChEBI" id="CHEBI:456216"/>
        <dbReference type="EC" id="2.7.4.9"/>
    </reaction>
</comment>
<comment type="similarity">
    <text evidence="3">Belongs to the thymidylate kinase family.</text>
</comment>
<accession>Q9CIG4</accession>
<feature type="chain" id="PRO_0000155288" description="Thymidylate kinase">
    <location>
        <begin position="1"/>
        <end position="211"/>
    </location>
</feature>
<feature type="binding site" evidence="2">
    <location>
        <begin position="10"/>
        <end position="17"/>
    </location>
    <ligand>
        <name>ATP</name>
        <dbReference type="ChEBI" id="CHEBI:30616"/>
    </ligand>
</feature>
<name>KTHY_LACLA</name>
<evidence type="ECO:0000250" key="1"/>
<evidence type="ECO:0000255" key="2"/>
<evidence type="ECO:0000305" key="3"/>
<proteinExistence type="inferred from homology"/>
<gene>
    <name type="primary">tmk</name>
    <name type="ordered locus">LL0398</name>
    <name type="ORF">L3846</name>
</gene>
<reference key="1">
    <citation type="journal article" date="2001" name="Genome Res.">
        <title>The complete genome sequence of the lactic acid bacterium Lactococcus lactis ssp. lactis IL1403.</title>
        <authorList>
            <person name="Bolotin A."/>
            <person name="Wincker P."/>
            <person name="Mauger S."/>
            <person name="Jaillon O."/>
            <person name="Malarme K."/>
            <person name="Weissenbach J."/>
            <person name="Ehrlich S.D."/>
            <person name="Sorokin A."/>
        </authorList>
    </citation>
    <scope>NUCLEOTIDE SEQUENCE [LARGE SCALE GENOMIC DNA]</scope>
    <source>
        <strain>IL1403</strain>
    </source>
</reference>
<protein>
    <recommendedName>
        <fullName>Thymidylate kinase</fullName>
        <ecNumber>2.7.4.9</ecNumber>
    </recommendedName>
    <alternativeName>
        <fullName>dTMP kinase</fullName>
    </alternativeName>
</protein>
<sequence length="211" mass="23999">MNGILISLEGPDGAGKTTVLKEILPEIQKMKREIVPTREPGGVRVAEEIRQIILDPKNTDIDSKTELMLFAAARRLHMQEKMLPALQAGKVVIVDRFIDSSVAYQGYGRDLGVEVVDWLNYFATDGLKPDLTLYFDVDTDVALERIMKNRADEVNRLDLERAEMHRKVREGYLEIVVKEPERFVKIDASQPLEKVVADTLSVLKKRFVSEF</sequence>